<comment type="function">
    <text evidence="1">Isoform G1P plays an essential role in phage assembly. It is required to increase the number of adhesion zones between the inner and outer membranes of the host cell. The extrusion of neo-synthesized phages occurs at these adhesion sites. May be involved with G4P in creating zone through which the phage assembled and extruded (By similarity).</text>
</comment>
<comment type="function">
    <text evidence="1">Isoform G11P is also involved in phage assembly, probably playing a structural role in the formation of the phage assembly site.</text>
</comment>
<comment type="subunit">
    <text evidence="1">Interacts with G4P; this interaction results in a complex that spans the inner an outer host membranes.</text>
</comment>
<comment type="subcellular location">
    <subcellularLocation>
        <location evidence="4">Host membrane</location>
        <topology evidence="4">Single-pass membrane protein</topology>
    </subcellularLocation>
</comment>
<comment type="alternative products">
    <event type="alternative initiation"/>
    <isoform>
        <id>O55247-1</id>
        <name>G1P</name>
        <name>Gene 1 protein</name>
        <sequence type="displayed"/>
    </isoform>
    <isoform>
        <id>O55247-2</id>
        <name>G11P</name>
        <name>Gene 11 protein</name>
        <sequence type="described" ref="VSP_037576"/>
    </isoform>
</comment>
<comment type="similarity">
    <text evidence="4">Belongs to the inovirus G1P protein family.</text>
</comment>
<organism>
    <name type="scientific">Xanthomonas phage phiLf</name>
    <name type="common">Bacteriophage phi-Lf</name>
    <dbReference type="NCBI Taxonomy" id="28365"/>
    <lineage>
        <taxon>Viruses</taxon>
        <taxon>Monodnaviria</taxon>
        <taxon>Loebvirae</taxon>
        <taxon>Hofneiviricota</taxon>
        <taxon>Faserviricetes</taxon>
        <taxon>Tubulavirales</taxon>
        <taxon>Inoviridae</taxon>
    </lineage>
</organism>
<protein>
    <recommendedName>
        <fullName>Gene 1 protein</fullName>
    </recommendedName>
    <alternativeName>
        <fullName>G1P</fullName>
    </alternativeName>
</protein>
<gene>
    <name type="primary">I</name>
</gene>
<organismHost>
    <name type="scientific">Xanthomonas campestris pv. campestris</name>
    <dbReference type="NCBI Taxonomy" id="340"/>
</organismHost>
<proteinExistence type="inferred from homology"/>
<reference key="1">
    <citation type="journal article" date="1996" name="Gene">
        <title>Nucleotide sequence of the gene presumably encoding the adsorption protein of filamentous phage phi Lf.</title>
        <authorList>
            <person name="Wen F.S."/>
            <person name="Tseng Y.H."/>
        </authorList>
    </citation>
    <scope>NUCLEOTIDE SEQUENCE [GENOMIC DNA]</scope>
</reference>
<reference key="2">
    <citation type="journal article" date="1997" name="Biochem. Biophys. Res. Commun.">
        <title>Identification of gene VI of filamentous phage phi Lf coding for a 10-kDa minor coat protein.</title>
        <authorList>
            <person name="Liu T.J."/>
            <person name="Wen F.S."/>
            <person name="Tseng T.T."/>
            <person name="Yang M.T."/>
            <person name="Lin N.T."/>
            <person name="Tseng Y.H."/>
        </authorList>
    </citation>
    <scope>NUCLEOTIDE SEQUENCE [GENOMIC DNA]</scope>
</reference>
<reference key="3">
    <citation type="journal article" date="1998" name="Biochem. Biophys. Res. Commun.">
        <title>Sequence analysis and expression of the filamentous phage phi Lf gene I encoding a 48-kDa protein associated with host cell membrane.</title>
        <authorList>
            <person name="Chang K.H."/>
            <person name="Wen F.S."/>
            <person name="Tseng T.T."/>
            <person name="Lin N.T."/>
            <person name="Yang M.T."/>
            <person name="Tseng Y.H."/>
        </authorList>
    </citation>
    <scope>NUCLEOTIDE SEQUENCE [GENOMIC DNA]</scope>
</reference>
<sequence>MLVFNEGVPRAGKSYDAVKNHILPALKKGRRVFARLNGLRFDRIAKHLGMAENDVQHLLVLVDTKDVSKLFACTQDESGKWCIPDEFKDALVVIDEVHEFYVNERKPLAPAVENFWALLGQNGGDAVIMTQWINRLHSAVKARIEKKNTFQKLTAIGMKGRYRVTYFHTTSPGKFEKVGGQTLKYDPAIFPLYDGYAPGAENTEVYEEGGKNVWAAMAVRAAIFLTLGGVGIYFFMHYFTKDRADPNKPMASASQTTKPTHVGAGFANGAPSVPIQPPPPDPLADLTQEQRYVAQLADKGRIRLSARARVGDQDRAWIQWIDASNNVVEELDLSQLRALGYSVSVVTYGVRLSAGKHIMVATAWPWTAPIREKDARLYNMAPDGSGGAAGVATAGSDGGGADRDQVRGGVIEYGPRTQGTFPDNKGYSSSTSTPATTLQM</sequence>
<feature type="chain" id="PRO_0000378353" description="Gene 1 protein">
    <location>
        <begin position="1"/>
        <end position="440"/>
    </location>
</feature>
<feature type="transmembrane region" description="Helical" evidence="2">
    <location>
        <begin position="213"/>
        <end position="235"/>
    </location>
</feature>
<feature type="region of interest" description="Disordered" evidence="3">
    <location>
        <begin position="386"/>
        <end position="405"/>
    </location>
</feature>
<feature type="region of interest" description="Disordered" evidence="3">
    <location>
        <begin position="413"/>
        <end position="440"/>
    </location>
</feature>
<feature type="short sequence motif" description="DEAH box">
    <location>
        <begin position="95"/>
        <end position="98"/>
    </location>
</feature>
<feature type="compositionally biased region" description="Polar residues" evidence="3">
    <location>
        <begin position="417"/>
        <end position="440"/>
    </location>
</feature>
<feature type="binding site" evidence="2">
    <location>
        <begin position="7"/>
        <end position="14"/>
    </location>
    <ligand>
        <name>ATP</name>
        <dbReference type="ChEBI" id="CHEBI:30616"/>
    </ligand>
</feature>
<feature type="splice variant" id="VSP_037576" description="In isoform G11P." evidence="4">
    <location>
        <begin position="1"/>
        <end position="249"/>
    </location>
</feature>
<accession>O55247</accession>
<evidence type="ECO:0000250" key="1"/>
<evidence type="ECO:0000255" key="2"/>
<evidence type="ECO:0000256" key="3">
    <source>
        <dbReference type="SAM" id="MobiDB-lite"/>
    </source>
</evidence>
<evidence type="ECO:0000305" key="4"/>
<name>G1P_BPPHL</name>
<dbReference type="EMBL" id="AF018286">
    <property type="protein sequence ID" value="AAB88261.1"/>
    <property type="molecule type" value="Genomic_DNA"/>
</dbReference>
<dbReference type="PIR" id="JE0085">
    <property type="entry name" value="JE0085"/>
</dbReference>
<dbReference type="Proteomes" id="UP000007611">
    <property type="component" value="Genome"/>
</dbReference>
<dbReference type="GO" id="GO:0033644">
    <property type="term" value="C:host cell membrane"/>
    <property type="evidence" value="ECO:0007669"/>
    <property type="project" value="UniProtKB-SubCell"/>
</dbReference>
<dbReference type="GO" id="GO:0016020">
    <property type="term" value="C:membrane"/>
    <property type="evidence" value="ECO:0007669"/>
    <property type="project" value="UniProtKB-KW"/>
</dbReference>
<dbReference type="GO" id="GO:0005524">
    <property type="term" value="F:ATP binding"/>
    <property type="evidence" value="ECO:0007669"/>
    <property type="project" value="UniProtKB-KW"/>
</dbReference>
<dbReference type="GO" id="GO:0099045">
    <property type="term" value="P:viral extrusion"/>
    <property type="evidence" value="ECO:0007669"/>
    <property type="project" value="UniProtKB-KW"/>
</dbReference>
<dbReference type="Gene3D" id="3.40.50.300">
    <property type="entry name" value="P-loop containing nucleotide triphosphate hydrolases"/>
    <property type="match status" value="1"/>
</dbReference>
<dbReference type="InterPro" id="IPR027417">
    <property type="entry name" value="P-loop_NTPase"/>
</dbReference>
<dbReference type="InterPro" id="IPR008900">
    <property type="entry name" value="Zot_N"/>
</dbReference>
<dbReference type="Pfam" id="PF05707">
    <property type="entry name" value="Zot"/>
    <property type="match status" value="1"/>
</dbReference>
<dbReference type="PROSITE" id="PS00690">
    <property type="entry name" value="DEAH_ATP_HELICASE"/>
    <property type="match status" value="1"/>
</dbReference>
<keyword id="KW-0024">Alternative initiation</keyword>
<keyword id="KW-0067">ATP-binding</keyword>
<keyword id="KW-1043">Host membrane</keyword>
<keyword id="KW-0472">Membrane</keyword>
<keyword id="KW-0547">Nucleotide-binding</keyword>
<keyword id="KW-1185">Reference proteome</keyword>
<keyword id="KW-0812">Transmembrane</keyword>
<keyword id="KW-1133">Transmembrane helix</keyword>
<keyword id="KW-1249">Viral extrusion</keyword>
<keyword id="KW-1188">Viral release from host cell</keyword>